<proteinExistence type="predicted"/>
<organism>
    <name type="scientific">Arabidopsis thaliana</name>
    <name type="common">Mouse-ear cress</name>
    <dbReference type="NCBI Taxonomy" id="3702"/>
    <lineage>
        <taxon>Eukaryota</taxon>
        <taxon>Viridiplantae</taxon>
        <taxon>Streptophyta</taxon>
        <taxon>Embryophyta</taxon>
        <taxon>Tracheophyta</taxon>
        <taxon>Spermatophyta</taxon>
        <taxon>Magnoliopsida</taxon>
        <taxon>eudicotyledons</taxon>
        <taxon>Gunneridae</taxon>
        <taxon>Pentapetalae</taxon>
        <taxon>rosids</taxon>
        <taxon>malvids</taxon>
        <taxon>Brassicales</taxon>
        <taxon>Brassicaceae</taxon>
        <taxon>Camelineae</taxon>
        <taxon>Arabidopsis</taxon>
    </lineage>
</organism>
<accession>Q9FFU7</accession>
<feature type="chain" id="PRO_0000281987" description="Putative F-box/LRR-repeat protein At5g54820">
    <location>
        <begin position="1"/>
        <end position="472"/>
    </location>
</feature>
<feature type="domain" description="F-box" evidence="1">
    <location>
        <begin position="6"/>
        <end position="54"/>
    </location>
</feature>
<feature type="repeat" description="LRR 1">
    <location>
        <begin position="58"/>
        <end position="87"/>
    </location>
</feature>
<feature type="repeat" description="LRR 2">
    <location>
        <begin position="135"/>
        <end position="164"/>
    </location>
</feature>
<feature type="repeat" description="LRR 3">
    <location>
        <begin position="183"/>
        <end position="208"/>
    </location>
</feature>
<feature type="repeat" description="LRR 4">
    <location>
        <begin position="225"/>
        <end position="250"/>
    </location>
</feature>
<feature type="repeat" description="LRR 5">
    <location>
        <begin position="283"/>
        <end position="308"/>
    </location>
</feature>
<feature type="repeat" description="LRR 6">
    <location>
        <begin position="338"/>
        <end position="363"/>
    </location>
</feature>
<evidence type="ECO:0000255" key="1">
    <source>
        <dbReference type="PROSITE-ProRule" id="PRU00080"/>
    </source>
</evidence>
<reference key="1">
    <citation type="journal article" date="1997" name="DNA Res.">
        <title>Structural analysis of Arabidopsis thaliana chromosome 5. I. Sequence features of the 1.6 Mb regions covered by twenty physically assigned P1 clones.</title>
        <authorList>
            <person name="Sato S."/>
            <person name="Kotani H."/>
            <person name="Nakamura Y."/>
            <person name="Kaneko T."/>
            <person name="Asamizu E."/>
            <person name="Fukami M."/>
            <person name="Miyajima N."/>
            <person name="Tabata S."/>
        </authorList>
    </citation>
    <scope>NUCLEOTIDE SEQUENCE [LARGE SCALE GENOMIC DNA]</scope>
    <source>
        <strain>cv. Columbia</strain>
    </source>
</reference>
<reference key="2">
    <citation type="journal article" date="2017" name="Plant J.">
        <title>Araport11: a complete reannotation of the Arabidopsis thaliana reference genome.</title>
        <authorList>
            <person name="Cheng C.Y."/>
            <person name="Krishnakumar V."/>
            <person name="Chan A.P."/>
            <person name="Thibaud-Nissen F."/>
            <person name="Schobel S."/>
            <person name="Town C.D."/>
        </authorList>
    </citation>
    <scope>GENOME REANNOTATION</scope>
    <source>
        <strain>cv. Columbia</strain>
    </source>
</reference>
<name>FBL90_ARATH</name>
<sequence>MDSIQQDRLSSLPDILLIMIISFLPLKECVRTSVLSKRWRYLCLETTNLSFKESDYVNPDITDAEYSRIVAYRSFFCSVDKWVSITQHQVVESFEICFSHLVGFEDKIDALIEYAVSTRVKNLVVDLSNPSWRSNGDISYRHFMYTLPKSVYSLTTLESLKIYGCKFDPSKFVNPVLLRSLSIGWVRLENLHSLLSKSPSLQSLSIKNCWGVDITSMAGQFRELVIEHSDFSYMQCAFELPRIHSFKYSGELFEFYFDVVNVIIPNVYLDFGEERVYDLQSQSSRISGEVISRIINDLRAAETLTVCPYILQVIPECEKPSDLLQPMETRHLVLRTKMHTKEFNGIILLLNNCPNLETLGFDILTPCPFSATSSDEGIDPKTYWMQKRTCKSLRKTLKVVVIRNFCGSSNELNVLRYLIRSASGAGDALERVELYVPNGMEESQAMVVFAKAEMLQRTSKHVQVLCAQLLKK</sequence>
<keyword id="KW-0433">Leucine-rich repeat</keyword>
<keyword id="KW-1185">Reference proteome</keyword>
<keyword id="KW-0677">Repeat</keyword>
<dbReference type="EMBL" id="AB005232">
    <property type="protein sequence ID" value="BAB08761.1"/>
    <property type="molecule type" value="Genomic_DNA"/>
</dbReference>
<dbReference type="EMBL" id="CP002688">
    <property type="protein sequence ID" value="AED96544.1"/>
    <property type="molecule type" value="Genomic_DNA"/>
</dbReference>
<dbReference type="RefSeq" id="NP_200293.1">
    <property type="nucleotide sequence ID" value="NM_124863.1"/>
</dbReference>
<dbReference type="FunCoup" id="Q9FFU7">
    <property type="interactions" value="12"/>
</dbReference>
<dbReference type="STRING" id="3702.Q9FFU7"/>
<dbReference type="iPTMnet" id="Q9FFU7"/>
<dbReference type="PaxDb" id="3702-AT5G54820.1"/>
<dbReference type="EnsemblPlants" id="AT5G54820.1">
    <property type="protein sequence ID" value="AT5G54820.1"/>
    <property type="gene ID" value="AT5G54820"/>
</dbReference>
<dbReference type="GeneID" id="835572"/>
<dbReference type="Gramene" id="AT5G54820.1">
    <property type="protein sequence ID" value="AT5G54820.1"/>
    <property type="gene ID" value="AT5G54820"/>
</dbReference>
<dbReference type="KEGG" id="ath:AT5G54820"/>
<dbReference type="Araport" id="AT5G54820"/>
<dbReference type="TAIR" id="AT5G54820"/>
<dbReference type="eggNOG" id="ENOG502QVFC">
    <property type="taxonomic scope" value="Eukaryota"/>
</dbReference>
<dbReference type="HOGENOM" id="CLU_045042_0_0_1"/>
<dbReference type="InParanoid" id="Q9FFU7"/>
<dbReference type="OMA" id="SECEHLE"/>
<dbReference type="PhylomeDB" id="Q9FFU7"/>
<dbReference type="PRO" id="PR:Q9FFU7"/>
<dbReference type="Proteomes" id="UP000006548">
    <property type="component" value="Chromosome 5"/>
</dbReference>
<dbReference type="ExpressionAtlas" id="Q9FFU7">
    <property type="expression patterns" value="differential"/>
</dbReference>
<dbReference type="CDD" id="cd22160">
    <property type="entry name" value="F-box_AtFBL13-like"/>
    <property type="match status" value="1"/>
</dbReference>
<dbReference type="Gene3D" id="1.20.1280.50">
    <property type="match status" value="1"/>
</dbReference>
<dbReference type="Gene3D" id="3.80.10.10">
    <property type="entry name" value="Ribonuclease Inhibitor"/>
    <property type="match status" value="1"/>
</dbReference>
<dbReference type="InterPro" id="IPR036047">
    <property type="entry name" value="F-box-like_dom_sf"/>
</dbReference>
<dbReference type="InterPro" id="IPR053781">
    <property type="entry name" value="F-box_AtFBL13-like"/>
</dbReference>
<dbReference type="InterPro" id="IPR001810">
    <property type="entry name" value="F-box_dom"/>
</dbReference>
<dbReference type="InterPro" id="IPR055294">
    <property type="entry name" value="FBL60-like"/>
</dbReference>
<dbReference type="InterPro" id="IPR055357">
    <property type="entry name" value="LRR_At1g61320_AtMIF1"/>
</dbReference>
<dbReference type="InterPro" id="IPR032675">
    <property type="entry name" value="LRR_dom_sf"/>
</dbReference>
<dbReference type="PANTHER" id="PTHR31293">
    <property type="entry name" value="RNI-LIKE SUPERFAMILY PROTEIN"/>
    <property type="match status" value="1"/>
</dbReference>
<dbReference type="PANTHER" id="PTHR31293:SF12">
    <property type="entry name" value="RNI-LIKE SUPERFAMILY PROTEIN"/>
    <property type="match status" value="1"/>
</dbReference>
<dbReference type="Pfam" id="PF00646">
    <property type="entry name" value="F-box"/>
    <property type="match status" value="1"/>
</dbReference>
<dbReference type="Pfam" id="PF23622">
    <property type="entry name" value="LRR_At1g61320_AtMIF1"/>
    <property type="match status" value="1"/>
</dbReference>
<dbReference type="SUPFAM" id="SSF81383">
    <property type="entry name" value="F-box domain"/>
    <property type="match status" value="1"/>
</dbReference>
<dbReference type="SUPFAM" id="SSF52047">
    <property type="entry name" value="RNI-like"/>
    <property type="match status" value="1"/>
</dbReference>
<dbReference type="PROSITE" id="PS50181">
    <property type="entry name" value="FBOX"/>
    <property type="match status" value="1"/>
</dbReference>
<protein>
    <recommendedName>
        <fullName>Putative F-box/LRR-repeat protein At5g54820</fullName>
    </recommendedName>
</protein>
<gene>
    <name type="ordered locus">At5g54820</name>
    <name type="ORF">MBG8.8</name>
</gene>